<dbReference type="EC" id="2.7.1.130" evidence="1"/>
<dbReference type="EMBL" id="CP000247">
    <property type="protein sequence ID" value="ABG68941.1"/>
    <property type="molecule type" value="Genomic_DNA"/>
</dbReference>
<dbReference type="RefSeq" id="WP_000570509.1">
    <property type="nucleotide sequence ID" value="NC_008253.1"/>
</dbReference>
<dbReference type="SMR" id="Q0TJD8"/>
<dbReference type="KEGG" id="ecp:ECP_0926"/>
<dbReference type="HOGENOM" id="CLU_038816_2_0_6"/>
<dbReference type="UniPathway" id="UPA00359">
    <property type="reaction ID" value="UER00482"/>
</dbReference>
<dbReference type="Proteomes" id="UP000009182">
    <property type="component" value="Chromosome"/>
</dbReference>
<dbReference type="GO" id="GO:0005886">
    <property type="term" value="C:plasma membrane"/>
    <property type="evidence" value="ECO:0007669"/>
    <property type="project" value="TreeGrafter"/>
</dbReference>
<dbReference type="GO" id="GO:0005524">
    <property type="term" value="F:ATP binding"/>
    <property type="evidence" value="ECO:0007669"/>
    <property type="project" value="UniProtKB-UniRule"/>
</dbReference>
<dbReference type="GO" id="GO:0009029">
    <property type="term" value="F:tetraacyldisaccharide 4'-kinase activity"/>
    <property type="evidence" value="ECO:0007669"/>
    <property type="project" value="UniProtKB-UniRule"/>
</dbReference>
<dbReference type="GO" id="GO:0009245">
    <property type="term" value="P:lipid A biosynthetic process"/>
    <property type="evidence" value="ECO:0007669"/>
    <property type="project" value="UniProtKB-UniRule"/>
</dbReference>
<dbReference type="GO" id="GO:0009244">
    <property type="term" value="P:lipopolysaccharide core region biosynthetic process"/>
    <property type="evidence" value="ECO:0007669"/>
    <property type="project" value="TreeGrafter"/>
</dbReference>
<dbReference type="HAMAP" id="MF_00409">
    <property type="entry name" value="LpxK"/>
    <property type="match status" value="1"/>
</dbReference>
<dbReference type="InterPro" id="IPR003758">
    <property type="entry name" value="LpxK"/>
</dbReference>
<dbReference type="InterPro" id="IPR027417">
    <property type="entry name" value="P-loop_NTPase"/>
</dbReference>
<dbReference type="NCBIfam" id="TIGR00682">
    <property type="entry name" value="lpxK"/>
    <property type="match status" value="1"/>
</dbReference>
<dbReference type="PANTHER" id="PTHR42724">
    <property type="entry name" value="TETRAACYLDISACCHARIDE 4'-KINASE"/>
    <property type="match status" value="1"/>
</dbReference>
<dbReference type="PANTHER" id="PTHR42724:SF1">
    <property type="entry name" value="TETRAACYLDISACCHARIDE 4'-KINASE, MITOCHONDRIAL-RELATED"/>
    <property type="match status" value="1"/>
</dbReference>
<dbReference type="Pfam" id="PF02606">
    <property type="entry name" value="LpxK"/>
    <property type="match status" value="1"/>
</dbReference>
<dbReference type="SUPFAM" id="SSF52540">
    <property type="entry name" value="P-loop containing nucleoside triphosphate hydrolases"/>
    <property type="match status" value="1"/>
</dbReference>
<evidence type="ECO:0000255" key="1">
    <source>
        <dbReference type="HAMAP-Rule" id="MF_00409"/>
    </source>
</evidence>
<proteinExistence type="inferred from homology"/>
<name>LPXK_ECOL5</name>
<reference key="1">
    <citation type="journal article" date="2006" name="Mol. Microbiol.">
        <title>Role of pathogenicity island-associated integrases in the genome plasticity of uropathogenic Escherichia coli strain 536.</title>
        <authorList>
            <person name="Hochhut B."/>
            <person name="Wilde C."/>
            <person name="Balling G."/>
            <person name="Middendorf B."/>
            <person name="Dobrindt U."/>
            <person name="Brzuszkiewicz E."/>
            <person name="Gottschalk G."/>
            <person name="Carniel E."/>
            <person name="Hacker J."/>
        </authorList>
    </citation>
    <scope>NUCLEOTIDE SEQUENCE [LARGE SCALE GENOMIC DNA]</scope>
    <source>
        <strain>536 / UPEC</strain>
    </source>
</reference>
<comment type="function">
    <text evidence="1">Transfers the gamma-phosphate of ATP to the 4'-position of a tetraacyldisaccharide 1-phosphate intermediate (termed DS-1-P) to form tetraacyldisaccharide 1,4'-bis-phosphate (lipid IVA).</text>
</comment>
<comment type="catalytic activity">
    <reaction evidence="1">
        <text>a lipid A disaccharide + ATP = a lipid IVA + ADP + H(+)</text>
        <dbReference type="Rhea" id="RHEA:67840"/>
        <dbReference type="ChEBI" id="CHEBI:15378"/>
        <dbReference type="ChEBI" id="CHEBI:30616"/>
        <dbReference type="ChEBI" id="CHEBI:176343"/>
        <dbReference type="ChEBI" id="CHEBI:176425"/>
        <dbReference type="ChEBI" id="CHEBI:456216"/>
        <dbReference type="EC" id="2.7.1.130"/>
    </reaction>
</comment>
<comment type="pathway">
    <text evidence="1">Glycolipid biosynthesis; lipid IV(A) biosynthesis; lipid IV(A) from (3R)-3-hydroxytetradecanoyl-[acyl-carrier-protein] and UDP-N-acetyl-alpha-D-glucosamine: step 6/6.</text>
</comment>
<comment type="similarity">
    <text evidence="1">Belongs to the LpxK family.</text>
</comment>
<gene>
    <name evidence="1" type="primary">lpxK</name>
    <name type="ordered locus">ECP_0926</name>
</gene>
<organism>
    <name type="scientific">Escherichia coli O6:K15:H31 (strain 536 / UPEC)</name>
    <dbReference type="NCBI Taxonomy" id="362663"/>
    <lineage>
        <taxon>Bacteria</taxon>
        <taxon>Pseudomonadati</taxon>
        <taxon>Pseudomonadota</taxon>
        <taxon>Gammaproteobacteria</taxon>
        <taxon>Enterobacterales</taxon>
        <taxon>Enterobacteriaceae</taxon>
        <taxon>Escherichia</taxon>
    </lineage>
</organism>
<accession>Q0TJD8</accession>
<feature type="chain" id="PRO_0000291205" description="Tetraacyldisaccharide 4'-kinase">
    <location>
        <begin position="1"/>
        <end position="328"/>
    </location>
</feature>
<feature type="binding site" evidence="1">
    <location>
        <begin position="55"/>
        <end position="62"/>
    </location>
    <ligand>
        <name>ATP</name>
        <dbReference type="ChEBI" id="CHEBI:30616"/>
    </ligand>
</feature>
<keyword id="KW-0067">ATP-binding</keyword>
<keyword id="KW-0418">Kinase</keyword>
<keyword id="KW-0441">Lipid A biosynthesis</keyword>
<keyword id="KW-0444">Lipid biosynthesis</keyword>
<keyword id="KW-0443">Lipid metabolism</keyword>
<keyword id="KW-0547">Nucleotide-binding</keyword>
<keyword id="KW-0808">Transferase</keyword>
<protein>
    <recommendedName>
        <fullName evidence="1">Tetraacyldisaccharide 4'-kinase</fullName>
        <ecNumber evidence="1">2.7.1.130</ecNumber>
    </recommendedName>
    <alternativeName>
        <fullName evidence="1">Lipid A 4'-kinase</fullName>
    </alternativeName>
</protein>
<sequence>MIEKIWSGESPLWRLLLPLSWLYGLVSGAIRLCYKLKLKRAWRAPIPVVVVGNLTAGGNGKTPVVVWLVEQLQQRGIRVGVVSRGYGGKAESYPLLLSADTTTAQAGDEPVLIYQRTGAPVAVSPVRSDAVKAILAQHPDVQIIVTDDGLQHYRLARDVEIVAIDGVRRFGNGWWLPAGPMRERAGRLKSVDAVIVNGGVPRSGEIPMHLLPGQAVNLRTGTRCDVAQLEHVVAIAGIGHPPRFFATLKMCGVQPEKCVPLADHQSLNHADVSALVSAGQTLVMTEKDAVKCRAFAEENWWYLPVDAQLSGDEPAKLLAQLTSLASGH</sequence>